<proteinExistence type="inferred from homology"/>
<gene>
    <name type="primary">PNG1</name>
    <name type="ordered locus">CAGL0H05753g</name>
</gene>
<sequence>MVDPIYVEVADMFLKRYKDYVINLFKEPVPLNRVQKLLQENKFAGELFDMSNRLCTMYENGTWHSQVLETLDLDKIYANVDMMPLEDDSQYSDNLVKELLRYFKQDFFTWCNKPVCKSCGASGDDINGAAIQAPTNEEAKFNCGSVEVYHCQKCNSEVRFPRYNDPIKLLETRTGRCGEWCNLFTLVLKSFGLESRYIWNREDHVWCEYYSPYLKRWIHVDSCEQSFDEPFIYSKNWNKSMSYCIGFWRYGVVDVSKRYILQNQLPRDIIKEDDLQFLCHALTKRLRTGLSDDESYKMYCRDDLEQLELNPSATPTKEMQKLKISKTGNKGRISGSAEWKESRGENGK</sequence>
<keyword id="KW-0963">Cytoplasm</keyword>
<keyword id="KW-0378">Hydrolase</keyword>
<keyword id="KW-0479">Metal-binding</keyword>
<keyword id="KW-1185">Reference proteome</keyword>
<keyword id="KW-0862">Zinc</keyword>
<dbReference type="EC" id="3.5.1.52"/>
<dbReference type="EMBL" id="CR380954">
    <property type="protein sequence ID" value="CAG59979.1"/>
    <property type="molecule type" value="Genomic_DNA"/>
</dbReference>
<dbReference type="RefSeq" id="XP_447046.1">
    <property type="nucleotide sequence ID" value="XM_447046.1"/>
</dbReference>
<dbReference type="SMR" id="Q6FRU8"/>
<dbReference type="FunCoup" id="Q6FRU8">
    <property type="interactions" value="121"/>
</dbReference>
<dbReference type="STRING" id="284593.Q6FRU8"/>
<dbReference type="EnsemblFungi" id="CAGL0H05753g-T">
    <property type="protein sequence ID" value="CAGL0H05753g-T-p1"/>
    <property type="gene ID" value="CAGL0H05753g"/>
</dbReference>
<dbReference type="KEGG" id="cgr:2888806"/>
<dbReference type="CGD" id="CAL0131872">
    <property type="gene designation" value="CAGL0H05753g"/>
</dbReference>
<dbReference type="VEuPathDB" id="FungiDB:CAGL0H05753g"/>
<dbReference type="eggNOG" id="KOG0909">
    <property type="taxonomic scope" value="Eukaryota"/>
</dbReference>
<dbReference type="HOGENOM" id="CLU_031058_0_1_1"/>
<dbReference type="InParanoid" id="Q6FRU8"/>
<dbReference type="OMA" id="AWDKPRL"/>
<dbReference type="Proteomes" id="UP000002428">
    <property type="component" value="Chromosome H"/>
</dbReference>
<dbReference type="GO" id="GO:0005829">
    <property type="term" value="C:cytosol"/>
    <property type="evidence" value="ECO:0007669"/>
    <property type="project" value="EnsemblFungi"/>
</dbReference>
<dbReference type="GO" id="GO:0005634">
    <property type="term" value="C:nucleus"/>
    <property type="evidence" value="ECO:0007669"/>
    <property type="project" value="EnsemblFungi"/>
</dbReference>
<dbReference type="GO" id="GO:0120125">
    <property type="term" value="C:PNGase complex"/>
    <property type="evidence" value="ECO:0007669"/>
    <property type="project" value="EnsemblFungi"/>
</dbReference>
<dbReference type="GO" id="GO:0046872">
    <property type="term" value="F:metal ion binding"/>
    <property type="evidence" value="ECO:0007669"/>
    <property type="project" value="UniProtKB-KW"/>
</dbReference>
<dbReference type="GO" id="GO:0000224">
    <property type="term" value="F:peptide-N4-(N-acetyl-beta-glucosaminyl)asparagine amidase activity"/>
    <property type="evidence" value="ECO:0007669"/>
    <property type="project" value="UniProtKB-EC"/>
</dbReference>
<dbReference type="GO" id="GO:0006515">
    <property type="term" value="P:protein quality control for misfolded or incompletely synthesized proteins"/>
    <property type="evidence" value="ECO:0007669"/>
    <property type="project" value="EnsemblFungi"/>
</dbReference>
<dbReference type="GO" id="GO:0097466">
    <property type="term" value="P:ubiquitin-dependent glycoprotein ERAD pathway"/>
    <property type="evidence" value="ECO:0007669"/>
    <property type="project" value="EnsemblFungi"/>
</dbReference>
<dbReference type="FunFam" id="3.10.620.30:FF:000004">
    <property type="entry name" value="Peptidase (PNG1)"/>
    <property type="match status" value="1"/>
</dbReference>
<dbReference type="Gene3D" id="2.20.25.10">
    <property type="match status" value="1"/>
</dbReference>
<dbReference type="Gene3D" id="3.10.620.30">
    <property type="match status" value="1"/>
</dbReference>
<dbReference type="InterPro" id="IPR038765">
    <property type="entry name" value="Papain-like_cys_pep_sf"/>
</dbReference>
<dbReference type="InterPro" id="IPR050883">
    <property type="entry name" value="PNGase"/>
</dbReference>
<dbReference type="InterPro" id="IPR002931">
    <property type="entry name" value="Transglutaminase-like"/>
</dbReference>
<dbReference type="PANTHER" id="PTHR12143">
    <property type="entry name" value="PEPTIDE N-GLYCANASE PNGASE -RELATED"/>
    <property type="match status" value="1"/>
</dbReference>
<dbReference type="PANTHER" id="PTHR12143:SF19">
    <property type="entry name" value="PEPTIDE-N(4)-(N-ACETYL-BETA-GLUCOSAMINYL)ASPARAGINE AMIDASE"/>
    <property type="match status" value="1"/>
</dbReference>
<dbReference type="Pfam" id="PF01841">
    <property type="entry name" value="Transglut_core"/>
    <property type="match status" value="1"/>
</dbReference>
<dbReference type="SMART" id="SM00460">
    <property type="entry name" value="TGc"/>
    <property type="match status" value="1"/>
</dbReference>
<dbReference type="SUPFAM" id="SSF54001">
    <property type="entry name" value="Cysteine proteinases"/>
    <property type="match status" value="1"/>
</dbReference>
<feature type="chain" id="PRO_0000248987" description="Peptide-N(4)-(N-acetyl-beta-glucosaminyl)asparagine amidase">
    <location>
        <begin position="1"/>
        <end position="348"/>
    </location>
</feature>
<feature type="region of interest" description="Disordered" evidence="2">
    <location>
        <begin position="311"/>
        <end position="348"/>
    </location>
</feature>
<feature type="compositionally biased region" description="Basic and acidic residues" evidence="2">
    <location>
        <begin position="338"/>
        <end position="348"/>
    </location>
</feature>
<feature type="active site" description="Nucleophile" evidence="1">
    <location>
        <position position="177"/>
    </location>
</feature>
<feature type="active site" evidence="1">
    <location>
        <position position="204"/>
    </location>
</feature>
<feature type="active site" evidence="1">
    <location>
        <position position="221"/>
    </location>
</feature>
<feature type="binding site" evidence="1">
    <location>
        <position position="116"/>
    </location>
    <ligand>
        <name>Zn(2+)</name>
        <dbReference type="ChEBI" id="CHEBI:29105"/>
    </ligand>
</feature>
<feature type="binding site" evidence="1">
    <location>
        <position position="119"/>
    </location>
    <ligand>
        <name>Zn(2+)</name>
        <dbReference type="ChEBI" id="CHEBI:29105"/>
    </ligand>
</feature>
<feature type="binding site" evidence="1">
    <location>
        <position position="151"/>
    </location>
    <ligand>
        <name>Zn(2+)</name>
        <dbReference type="ChEBI" id="CHEBI:29105"/>
    </ligand>
</feature>
<feature type="binding site" evidence="1">
    <location>
        <position position="154"/>
    </location>
    <ligand>
        <name>Zn(2+)</name>
        <dbReference type="ChEBI" id="CHEBI:29105"/>
    </ligand>
</feature>
<feature type="binding site" evidence="1">
    <location>
        <position position="224"/>
    </location>
    <ligand>
        <name>substrate</name>
    </ligand>
</feature>
<evidence type="ECO:0000250" key="1"/>
<evidence type="ECO:0000256" key="2">
    <source>
        <dbReference type="SAM" id="MobiDB-lite"/>
    </source>
</evidence>
<evidence type="ECO:0000305" key="3"/>
<accession>Q6FRU8</accession>
<reference key="1">
    <citation type="journal article" date="2004" name="Nature">
        <title>Genome evolution in yeasts.</title>
        <authorList>
            <person name="Dujon B."/>
            <person name="Sherman D."/>
            <person name="Fischer G."/>
            <person name="Durrens P."/>
            <person name="Casaregola S."/>
            <person name="Lafontaine I."/>
            <person name="de Montigny J."/>
            <person name="Marck C."/>
            <person name="Neuveglise C."/>
            <person name="Talla E."/>
            <person name="Goffard N."/>
            <person name="Frangeul L."/>
            <person name="Aigle M."/>
            <person name="Anthouard V."/>
            <person name="Babour A."/>
            <person name="Barbe V."/>
            <person name="Barnay S."/>
            <person name="Blanchin S."/>
            <person name="Beckerich J.-M."/>
            <person name="Beyne E."/>
            <person name="Bleykasten C."/>
            <person name="Boisrame A."/>
            <person name="Boyer J."/>
            <person name="Cattolico L."/>
            <person name="Confanioleri F."/>
            <person name="de Daruvar A."/>
            <person name="Despons L."/>
            <person name="Fabre E."/>
            <person name="Fairhead C."/>
            <person name="Ferry-Dumazet H."/>
            <person name="Groppi A."/>
            <person name="Hantraye F."/>
            <person name="Hennequin C."/>
            <person name="Jauniaux N."/>
            <person name="Joyet P."/>
            <person name="Kachouri R."/>
            <person name="Kerrest A."/>
            <person name="Koszul R."/>
            <person name="Lemaire M."/>
            <person name="Lesur I."/>
            <person name="Ma L."/>
            <person name="Muller H."/>
            <person name="Nicaud J.-M."/>
            <person name="Nikolski M."/>
            <person name="Oztas S."/>
            <person name="Ozier-Kalogeropoulos O."/>
            <person name="Pellenz S."/>
            <person name="Potier S."/>
            <person name="Richard G.-F."/>
            <person name="Straub M.-L."/>
            <person name="Suleau A."/>
            <person name="Swennen D."/>
            <person name="Tekaia F."/>
            <person name="Wesolowski-Louvel M."/>
            <person name="Westhof E."/>
            <person name="Wirth B."/>
            <person name="Zeniou-Meyer M."/>
            <person name="Zivanovic Y."/>
            <person name="Bolotin-Fukuhara M."/>
            <person name="Thierry A."/>
            <person name="Bouchier C."/>
            <person name="Caudron B."/>
            <person name="Scarpelli C."/>
            <person name="Gaillardin C."/>
            <person name="Weissenbach J."/>
            <person name="Wincker P."/>
            <person name="Souciet J.-L."/>
        </authorList>
    </citation>
    <scope>NUCLEOTIDE SEQUENCE [LARGE SCALE GENOMIC DNA]</scope>
    <source>
        <strain>ATCC 2001 / BCRC 20586 / JCM 3761 / NBRC 0622 / NRRL Y-65 / CBS 138</strain>
    </source>
</reference>
<name>PNG1_CANGA</name>
<organism>
    <name type="scientific">Candida glabrata (strain ATCC 2001 / BCRC 20586 / JCM 3761 / NBRC 0622 / NRRL Y-65 / CBS 138)</name>
    <name type="common">Yeast</name>
    <name type="synonym">Nakaseomyces glabratus</name>
    <dbReference type="NCBI Taxonomy" id="284593"/>
    <lineage>
        <taxon>Eukaryota</taxon>
        <taxon>Fungi</taxon>
        <taxon>Dikarya</taxon>
        <taxon>Ascomycota</taxon>
        <taxon>Saccharomycotina</taxon>
        <taxon>Saccharomycetes</taxon>
        <taxon>Saccharomycetales</taxon>
        <taxon>Saccharomycetaceae</taxon>
        <taxon>Nakaseomyces</taxon>
    </lineage>
</organism>
<comment type="function">
    <text evidence="1">Specifically deglycosylates the denatured form of N-linked glycoproteins in the cytoplasm and assists their proteasome-mediated degradation. Cleaves the beta-aspartyl-glucosamine (GlcNAc) of the glycan and the amide side chain of Asn, converting Asn to Asp. Prefers proteins containing high-mannose over those bearing complex type oligosaccharides. Can recognize misfolded proteins in the endoplasmic reticulum that are exported to the cytosol to be destroyed and deglycosylate them, while it has no activity toward native proteins. Deglycosylation is a prerequisite for subsequent proteasome-mediated degradation of some, but not all, misfolded glycoproteins (By similarity).</text>
</comment>
<comment type="catalytic activity">
    <reaction>
        <text>Hydrolysis of an N(4)-(acetyl-beta-D-glucosaminyl)asparagine residue in which the glucosamine residue may be further glycosylated, to yield a (substituted) N-acetyl-beta-D-glucosaminylamine and a peptide containing an aspartate residue.</text>
        <dbReference type="EC" id="3.5.1.52"/>
    </reaction>
</comment>
<comment type="cofactor">
    <cofactor evidence="1">
        <name>Zn(2+)</name>
        <dbReference type="ChEBI" id="CHEBI:29105"/>
    </cofactor>
    <text evidence="1">Binds 1 zinc ion per subunit.</text>
</comment>
<comment type="subcellular location">
    <subcellularLocation>
        <location evidence="1">Cytoplasm</location>
    </subcellularLocation>
</comment>
<comment type="similarity">
    <text evidence="3">Belongs to the transglutaminase-like superfamily. PNGase family.</text>
</comment>
<protein>
    <recommendedName>
        <fullName>Peptide-N(4)-(N-acetyl-beta-glucosaminyl)asparagine amidase</fullName>
        <shortName>PNGase</shortName>
        <ecNumber>3.5.1.52</ecNumber>
    </recommendedName>
    <alternativeName>
        <fullName>Peptide:N-glycanase 1</fullName>
    </alternativeName>
</protein>